<protein>
    <recommendedName>
        <fullName evidence="7">Gamma conglutin 2</fullName>
    </recommendedName>
    <alternativeName>
        <fullName evidence="6">Conglutin gamma 48</fullName>
    </alternativeName>
    <allergenName evidence="7">Lup a gamma-conglutin</allergenName>
    <component>
        <recommendedName>
            <fullName evidence="7">Gamma conglutin 2 beta subunit</fullName>
        </recommendedName>
        <alternativeName>
            <fullName evidence="8">Gamma conglutin 2 small subunit</fullName>
        </alternativeName>
    </component>
    <component>
        <recommendedName>
            <fullName evidence="7">Gamma conglutin 2 alpha subunit</fullName>
        </recommendedName>
        <alternativeName>
            <fullName evidence="8">Gamma conglutin 2 large subunit</fullName>
        </alternativeName>
    </component>
</protein>
<dbReference type="EMBL" id="AJ297568">
    <property type="protein sequence ID" value="CAC17729.2"/>
    <property type="molecule type" value="Genomic_DNA"/>
</dbReference>
<dbReference type="SMR" id="Q9FEX1"/>
<dbReference type="Allergome" id="2686">
    <property type="allergen name" value="Lup a gamma_Conglutin"/>
</dbReference>
<dbReference type="GO" id="GO:0005576">
    <property type="term" value="C:extracellular region"/>
    <property type="evidence" value="ECO:0007669"/>
    <property type="project" value="UniProtKB-SubCell"/>
</dbReference>
<dbReference type="GO" id="GO:0004190">
    <property type="term" value="F:aspartic-type endopeptidase activity"/>
    <property type="evidence" value="ECO:0007669"/>
    <property type="project" value="InterPro"/>
</dbReference>
<dbReference type="GO" id="GO:0006508">
    <property type="term" value="P:proteolysis"/>
    <property type="evidence" value="ECO:0007669"/>
    <property type="project" value="InterPro"/>
</dbReference>
<dbReference type="CDD" id="cd05489">
    <property type="entry name" value="xylanase_inhibitor_I_like"/>
    <property type="match status" value="1"/>
</dbReference>
<dbReference type="FunFam" id="2.40.70.10:FF:000045">
    <property type="entry name" value="Basic 7S globulin"/>
    <property type="match status" value="1"/>
</dbReference>
<dbReference type="FunFam" id="2.40.70.10:FF:000126">
    <property type="entry name" value="Gamma conglutin 1"/>
    <property type="match status" value="1"/>
</dbReference>
<dbReference type="Gene3D" id="2.40.70.10">
    <property type="entry name" value="Acid Proteases"/>
    <property type="match status" value="2"/>
</dbReference>
<dbReference type="InterPro" id="IPR001461">
    <property type="entry name" value="Aspartic_peptidase_A1"/>
</dbReference>
<dbReference type="InterPro" id="IPR033121">
    <property type="entry name" value="PEPTIDASE_A1"/>
</dbReference>
<dbReference type="InterPro" id="IPR021109">
    <property type="entry name" value="Peptidase_aspartic_dom_sf"/>
</dbReference>
<dbReference type="InterPro" id="IPR032799">
    <property type="entry name" value="TAXi_C"/>
</dbReference>
<dbReference type="InterPro" id="IPR032861">
    <property type="entry name" value="TAXi_N"/>
</dbReference>
<dbReference type="InterPro" id="IPR033868">
    <property type="entry name" value="Xylanase_inhibitor_I-like"/>
</dbReference>
<dbReference type="PANTHER" id="PTHR47965">
    <property type="entry name" value="ASPARTYL PROTEASE-RELATED"/>
    <property type="match status" value="1"/>
</dbReference>
<dbReference type="PANTHER" id="PTHR47965:SF28">
    <property type="entry name" value="BASIC 7S GLOBULIN"/>
    <property type="match status" value="1"/>
</dbReference>
<dbReference type="Pfam" id="PF14541">
    <property type="entry name" value="TAXi_C"/>
    <property type="match status" value="1"/>
</dbReference>
<dbReference type="Pfam" id="PF14543">
    <property type="entry name" value="TAXi_N"/>
    <property type="match status" value="1"/>
</dbReference>
<dbReference type="SUPFAM" id="SSF50630">
    <property type="entry name" value="Acid proteases"/>
    <property type="match status" value="1"/>
</dbReference>
<dbReference type="PROSITE" id="PS51767">
    <property type="entry name" value="PEPTIDASE_A1"/>
    <property type="match status" value="1"/>
</dbReference>
<accession>Q9FEX1</accession>
<organism>
    <name type="scientific">Lupinus albus</name>
    <name type="common">White lupine</name>
    <name type="synonym">Lupinus termis</name>
    <dbReference type="NCBI Taxonomy" id="3870"/>
    <lineage>
        <taxon>Eukaryota</taxon>
        <taxon>Viridiplantae</taxon>
        <taxon>Streptophyta</taxon>
        <taxon>Embryophyta</taxon>
        <taxon>Tracheophyta</taxon>
        <taxon>Spermatophyta</taxon>
        <taxon>Magnoliopsida</taxon>
        <taxon>eudicotyledons</taxon>
        <taxon>Gunneridae</taxon>
        <taxon>Pentapetalae</taxon>
        <taxon>rosids</taxon>
        <taxon>fabids</taxon>
        <taxon>Fabales</taxon>
        <taxon>Fabaceae</taxon>
        <taxon>Papilionoideae</taxon>
        <taxon>50 kb inversion clade</taxon>
        <taxon>genistoids sensu lato</taxon>
        <taxon>core genistoids</taxon>
        <taxon>Genisteae</taxon>
        <taxon>Lupinus</taxon>
    </lineage>
</organism>
<sequence length="448" mass="49513">MAKNMAQIFPFIAVFLSCSFIFVLSSSQNSQSLYHNPQSTSSSSSKPSLLVLPIQQDASTGLHWANIHKRTPLMQVPVLLDLNGKHLWVTCSYHYSSSTYQAPFCHSTQCSRANSHHCFTCTDSATSRPGCHNNTCALMSSNPVTQEAGFGELAQDVLAIHSTHGSKLGPMVRVLQYLFSCAPSFLAQKGLPNNVQGPLGLGHAPISLQNQLFSHFGLKRQFAMCLSRYPTSNGAILFGDIYDLDNNYIHNSIDVLIDMVYTPLRISQQGEYFMQVNAIRVNKHMVVPTKNPSMLSSYHGDSRIGGAMITTTNPYTILHHSIFEVFTQVFANNMPKEAQVESVGPFGLCYDSRKLSGGIPSVEFVMDSHDDVWRISDENLMVQAQNGVSCLGFVDGGMHTRTEIVLGTHQLEENMVVFDLERSRVEFNSNSLKSHGKTCANIFDLNNA</sequence>
<comment type="function">
    <text evidence="6">Sulfur-rich seed storage protein that remains undegraded at germination.</text>
</comment>
<comment type="subunit">
    <text evidence="1 2">Two-subunit monomeric unit made of alpha and beta subunits coupled by disulfide bonds (at pH 4.5 and under non-reducing conditions) (By similarity). Can also form oligomers including dimer, tetramer and cyclic hexamer (trimer of dimers) (at pH &gt; 5.5) (By similarity). Component of globulins complexes which accumulate in seeds (By similarity). Interacts with flavonoids (e.g. apigenin glucosides) present in globulins complexes (By similarity).</text>
</comment>
<comment type="subcellular location">
    <subcellularLocation>
        <location evidence="6">Secreted</location>
        <location evidence="6">Extracellular space</location>
    </subcellularLocation>
    <text evidence="6">Present in the extracellular spaces of germinating cotyledons and in the young roots.</text>
</comment>
<comment type="tissue specificity">
    <text evidence="5">Expressed in developing seeds and in the young roots and cotyledons of germinating seeds and young seedlings.</text>
</comment>
<comment type="developmental stage">
    <text evidence="5">Accumulates during seed development.</text>
</comment>
<comment type="induction">
    <text evidence="6">Secreted in high amounts upon heat treatment of mature seeds.</text>
</comment>
<comment type="PTM">
    <text evidence="1">Glycosylated on alpha chain.</text>
</comment>
<comment type="allergen">
    <text evidence="1">Causes an allergic reaction in human.</text>
</comment>
<comment type="biotechnology">
    <text evidence="1">May be used in antidiabetic therapies and diets for type 2 diabetes (T2D).</text>
</comment>
<comment type="miscellaneous">
    <text evidence="1">Capable of reducing glycaemia in mammals.</text>
</comment>
<comment type="miscellaneous">
    <text evidence="1">Resistant to pancreatin-mediated digestion.</text>
</comment>
<comment type="similarity">
    <text evidence="4">Belongs to the peptidase A1 family.</text>
</comment>
<reference key="1">
    <citation type="journal article" date="2001" name="Biochim. Biophys. Acta">
        <title>Cloning, sequencing and expression in the seeds and radicles of two Lupinus albus conglutin gamma genes.</title>
        <authorList>
            <person name="Scarafoni A."/>
            <person name="Di Cataldo A."/>
            <person name="Vassilevskaia T.D."/>
            <person name="Bekman E.P."/>
            <person name="Rodrigues-Pousada C."/>
            <person name="Ceciliani F."/>
            <person name="Duranti M."/>
        </authorList>
    </citation>
    <scope>NUCLEOTIDE SEQUENCE [GENOMIC DNA]</scope>
    <scope>PROTEIN SEQUENCE OF 100-138; 199-214; 297-303 AND 342-348</scope>
    <scope>PROTEOLYTIC CLEAVAGE</scope>
    <scope>TISSUE SPECIFICITY</scope>
    <scope>INDUCTION BY HEAT</scope>
    <scope>SUBCELLULAR LOCATION</scope>
    <scope>FUNCTION</scope>
    <scope>DEVELOPMENTAL STAGE</scope>
    <source>
        <strain>cv. Ultra</strain>
    </source>
</reference>
<proteinExistence type="evidence at protein level"/>
<name>CONG2_LUPAL</name>
<evidence type="ECO:0000250" key="1">
    <source>
        <dbReference type="UniProtKB" id="Q42369"/>
    </source>
</evidence>
<evidence type="ECO:0000250" key="2">
    <source>
        <dbReference type="UniProtKB" id="Q9FSH9"/>
    </source>
</evidence>
<evidence type="ECO:0000255" key="3">
    <source>
        <dbReference type="PROSITE-ProRule" id="PRU00498"/>
    </source>
</evidence>
<evidence type="ECO:0000255" key="4">
    <source>
        <dbReference type="PROSITE-ProRule" id="PRU01103"/>
    </source>
</evidence>
<evidence type="ECO:0000269" key="5">
    <source>
    </source>
</evidence>
<evidence type="ECO:0000303" key="6">
    <source>
    </source>
</evidence>
<evidence type="ECO:0000305" key="7"/>
<evidence type="ECO:0000305" key="8">
    <source>
    </source>
</evidence>
<keyword id="KW-0020">Allergen</keyword>
<keyword id="KW-0903">Direct protein sequencing</keyword>
<keyword id="KW-1015">Disulfide bond</keyword>
<keyword id="KW-0325">Glycoprotein</keyword>
<keyword id="KW-0964">Secreted</keyword>
<keyword id="KW-0732">Signal</keyword>
<feature type="signal peptide" evidence="2">
    <location>
        <begin position="1"/>
        <end position="33"/>
    </location>
</feature>
<feature type="chain" id="PRO_0000446146" description="Gamma conglutin 2">
    <location>
        <begin position="34"/>
        <end position="448"/>
    </location>
</feature>
<feature type="chain" id="PRO_0000446147" description="Gamma conglutin 2 alpha subunit">
    <location>
        <begin position="34"/>
        <end position="296"/>
    </location>
</feature>
<feature type="chain" id="PRO_0000446148" description="Gamma conglutin 2 beta subunit">
    <location>
        <begin position="297"/>
        <end position="448"/>
    </location>
</feature>
<feature type="domain" description="Peptidase A1" evidence="4">
    <location>
        <begin position="63"/>
        <end position="428"/>
    </location>
</feature>
<feature type="site" description="Cleavage; partial" evidence="5">
    <location>
        <begin position="296"/>
        <end position="297"/>
    </location>
</feature>
<feature type="glycosylation site" description="N-linked (GlcNAc...) asparagine" evidence="3">
    <location>
        <position position="133"/>
    </location>
</feature>
<feature type="disulfide bond" evidence="1">
    <location>
        <begin position="91"/>
        <end position="181"/>
    </location>
</feature>
<feature type="disulfide bond" evidence="1">
    <location>
        <begin position="105"/>
        <end position="118"/>
    </location>
</feature>
<feature type="disulfide bond" evidence="1">
    <location>
        <begin position="110"/>
        <end position="136"/>
    </location>
</feature>
<feature type="disulfide bond" evidence="1">
    <location>
        <begin position="121"/>
        <end position="131"/>
    </location>
</feature>
<feature type="disulfide bond" description="Interchain (between alpha and beta chains, with C-439 in beta chain)" evidence="1">
    <location>
        <position position="225"/>
    </location>
</feature>
<feature type="disulfide bond" evidence="1">
    <location>
        <begin position="349"/>
        <end position="390"/>
    </location>
</feature>
<feature type="disulfide bond" description="Interchain (between alpha and beta chains, with C-225 in alpha chain)" evidence="1">
    <location>
        <position position="439"/>
    </location>
</feature>